<keyword id="KW-1005">Bacterial flagellum biogenesis</keyword>
<keyword id="KW-0574">Periplasm</keyword>
<keyword id="KW-1185">Reference proteome</keyword>
<keyword id="KW-0732">Signal</keyword>
<dbReference type="EMBL" id="L49337">
    <property type="protein sequence ID" value="AAB81414.1"/>
    <property type="molecule type" value="Genomic_DNA"/>
</dbReference>
<dbReference type="EMBL" id="AL591688">
    <property type="protein sequence ID" value="CAC45235.1"/>
    <property type="molecule type" value="Genomic_DNA"/>
</dbReference>
<dbReference type="RefSeq" id="NP_384769.1">
    <property type="nucleotide sequence ID" value="NC_003047.1"/>
</dbReference>
<dbReference type="SMR" id="Q52947"/>
<dbReference type="EnsemblBacteria" id="CAC45235">
    <property type="protein sequence ID" value="CAC45235"/>
    <property type="gene ID" value="SMc03031"/>
</dbReference>
<dbReference type="KEGG" id="sme:SMc03031"/>
<dbReference type="PATRIC" id="fig|266834.11.peg.2037"/>
<dbReference type="eggNOG" id="COG1261">
    <property type="taxonomic scope" value="Bacteria"/>
</dbReference>
<dbReference type="HOGENOM" id="CLU_131516_0_0_5"/>
<dbReference type="OrthoDB" id="8448733at2"/>
<dbReference type="Proteomes" id="UP000001976">
    <property type="component" value="Chromosome"/>
</dbReference>
<dbReference type="GO" id="GO:0042597">
    <property type="term" value="C:periplasmic space"/>
    <property type="evidence" value="ECO:0007669"/>
    <property type="project" value="UniProtKB-SubCell"/>
</dbReference>
<dbReference type="GO" id="GO:0044780">
    <property type="term" value="P:bacterial-type flagellum assembly"/>
    <property type="evidence" value="ECO:0007669"/>
    <property type="project" value="InterPro"/>
</dbReference>
<dbReference type="CDD" id="cd11614">
    <property type="entry name" value="SAF_CpaB_FlgA_like"/>
    <property type="match status" value="1"/>
</dbReference>
<dbReference type="Gene3D" id="2.30.30.760">
    <property type="match status" value="1"/>
</dbReference>
<dbReference type="Gene3D" id="3.90.1210.10">
    <property type="entry name" value="Antifreeze-like/N-acetylneuraminic acid synthase C-terminal domain"/>
    <property type="match status" value="1"/>
</dbReference>
<dbReference type="InterPro" id="IPR017585">
    <property type="entry name" value="Flag_basal_body_FlgA_C"/>
</dbReference>
<dbReference type="InterPro" id="IPR039246">
    <property type="entry name" value="Flagellar_FlgA"/>
</dbReference>
<dbReference type="InterPro" id="IPR013974">
    <property type="entry name" value="SAF"/>
</dbReference>
<dbReference type="NCBIfam" id="TIGR03170">
    <property type="entry name" value="flgA_cterm"/>
    <property type="match status" value="1"/>
</dbReference>
<dbReference type="PANTHER" id="PTHR36307">
    <property type="entry name" value="FLAGELLA BASAL BODY P-RING FORMATION PROTEIN FLGA"/>
    <property type="match status" value="1"/>
</dbReference>
<dbReference type="PANTHER" id="PTHR36307:SF1">
    <property type="entry name" value="FLAGELLA BASAL BODY P-RING FORMATION PROTEIN FLGA"/>
    <property type="match status" value="1"/>
</dbReference>
<dbReference type="Pfam" id="PF13144">
    <property type="entry name" value="ChapFlgA"/>
    <property type="match status" value="1"/>
</dbReference>
<dbReference type="SMART" id="SM00858">
    <property type="entry name" value="SAF"/>
    <property type="match status" value="1"/>
</dbReference>
<reference key="1">
    <citation type="submission" date="1996-03" db="EMBL/GenBank/DDBJ databases">
        <authorList>
            <person name="Platzer J."/>
            <person name="Schmitt R."/>
        </authorList>
    </citation>
    <scope>NUCLEOTIDE SEQUENCE [GENOMIC DNA]</scope>
    <source>
        <strain>RU11/001</strain>
    </source>
</reference>
<reference key="2">
    <citation type="journal article" date="2001" name="Proc. Natl. Acad. Sci. U.S.A.">
        <title>Analysis of the chromosome sequence of the legume symbiont Sinorhizobium meliloti strain 1021.</title>
        <authorList>
            <person name="Capela D."/>
            <person name="Barloy-Hubler F."/>
            <person name="Gouzy J."/>
            <person name="Bothe G."/>
            <person name="Ampe F."/>
            <person name="Batut J."/>
            <person name="Boistard P."/>
            <person name="Becker A."/>
            <person name="Boutry M."/>
            <person name="Cadieu E."/>
            <person name="Dreano S."/>
            <person name="Gloux S."/>
            <person name="Godrie T."/>
            <person name="Goffeau A."/>
            <person name="Kahn D."/>
            <person name="Kiss E."/>
            <person name="Lelaure V."/>
            <person name="Masuy D."/>
            <person name="Pohl T."/>
            <person name="Portetelle D."/>
            <person name="Puehler A."/>
            <person name="Purnelle B."/>
            <person name="Ramsperger U."/>
            <person name="Renard C."/>
            <person name="Thebault P."/>
            <person name="Vandenbol M."/>
            <person name="Weidner S."/>
            <person name="Galibert F."/>
        </authorList>
    </citation>
    <scope>NUCLEOTIDE SEQUENCE [LARGE SCALE GENOMIC DNA]</scope>
    <source>
        <strain>1021</strain>
    </source>
</reference>
<reference key="3">
    <citation type="journal article" date="2001" name="Science">
        <title>The composite genome of the legume symbiont Sinorhizobium meliloti.</title>
        <authorList>
            <person name="Galibert F."/>
            <person name="Finan T.M."/>
            <person name="Long S.R."/>
            <person name="Puehler A."/>
            <person name="Abola P."/>
            <person name="Ampe F."/>
            <person name="Barloy-Hubler F."/>
            <person name="Barnett M.J."/>
            <person name="Becker A."/>
            <person name="Boistard P."/>
            <person name="Bothe G."/>
            <person name="Boutry M."/>
            <person name="Bowser L."/>
            <person name="Buhrmester J."/>
            <person name="Cadieu E."/>
            <person name="Capela D."/>
            <person name="Chain P."/>
            <person name="Cowie A."/>
            <person name="Davis R.W."/>
            <person name="Dreano S."/>
            <person name="Federspiel N.A."/>
            <person name="Fisher R.F."/>
            <person name="Gloux S."/>
            <person name="Godrie T."/>
            <person name="Goffeau A."/>
            <person name="Golding B."/>
            <person name="Gouzy J."/>
            <person name="Gurjal M."/>
            <person name="Hernandez-Lucas I."/>
            <person name="Hong A."/>
            <person name="Huizar L."/>
            <person name="Hyman R.W."/>
            <person name="Jones T."/>
            <person name="Kahn D."/>
            <person name="Kahn M.L."/>
            <person name="Kalman S."/>
            <person name="Keating D.H."/>
            <person name="Kiss E."/>
            <person name="Komp C."/>
            <person name="Lelaure V."/>
            <person name="Masuy D."/>
            <person name="Palm C."/>
            <person name="Peck M.C."/>
            <person name="Pohl T.M."/>
            <person name="Portetelle D."/>
            <person name="Purnelle B."/>
            <person name="Ramsperger U."/>
            <person name="Surzycki R."/>
            <person name="Thebault P."/>
            <person name="Vandenbol M."/>
            <person name="Vorhoelter F.J."/>
            <person name="Weidner S."/>
            <person name="Wells D.H."/>
            <person name="Wong K."/>
            <person name="Yeh K.-C."/>
            <person name="Batut J."/>
        </authorList>
    </citation>
    <scope>NUCLEOTIDE SEQUENCE [LARGE SCALE GENOMIC DNA]</scope>
    <source>
        <strain>1021</strain>
    </source>
</reference>
<sequence>MFRRSPGGKANMSGRAQPARAVLFAAMASCLLSPAAALAEPPTAVIPKQTIYPGEKLDASMLEVVDVTNPDLRDGYVRSIDEVDGMVTKRTLLPGRVILASALREQYAVERGSTVRLVFNNGGLTITAAGSPLQDAAVGDLIRVRNVDTGVIVSGTVMADSTIHVVAK</sequence>
<gene>
    <name type="primary">flgA</name>
    <name type="ordered locus">R00663</name>
    <name type="ORF">SMc03031</name>
</gene>
<protein>
    <recommendedName>
        <fullName>Flagellar protein FlgA</fullName>
    </recommendedName>
</protein>
<name>FLGA_RHIME</name>
<proteinExistence type="inferred from homology"/>
<comment type="subcellular location">
    <subcellularLocation>
        <location evidence="2">Periplasm</location>
    </subcellularLocation>
</comment>
<comment type="similarity">
    <text evidence="2">Belongs to the FlgA family.</text>
</comment>
<evidence type="ECO:0000255" key="1"/>
<evidence type="ECO:0000305" key="2"/>
<organism>
    <name type="scientific">Rhizobium meliloti (strain 1021)</name>
    <name type="common">Ensifer meliloti</name>
    <name type="synonym">Sinorhizobium meliloti</name>
    <dbReference type="NCBI Taxonomy" id="266834"/>
    <lineage>
        <taxon>Bacteria</taxon>
        <taxon>Pseudomonadati</taxon>
        <taxon>Pseudomonadota</taxon>
        <taxon>Alphaproteobacteria</taxon>
        <taxon>Hyphomicrobiales</taxon>
        <taxon>Rhizobiaceae</taxon>
        <taxon>Sinorhizobium/Ensifer group</taxon>
        <taxon>Sinorhizobium</taxon>
    </lineage>
</organism>
<feature type="signal peptide" evidence="1">
    <location>
        <begin position="1"/>
        <end position="28"/>
    </location>
</feature>
<feature type="chain" id="PRO_0000009345" description="Flagellar protein FlgA">
    <location>
        <begin position="29"/>
        <end position="168"/>
    </location>
</feature>
<feature type="sequence conflict" description="In Ref. 1; AAB81414." evidence="2" ref="1">
    <original>R</original>
    <variation>L</variation>
    <location>
        <position position="15"/>
    </location>
</feature>
<feature type="sequence conflict" description="In Ref. 1; AAB81414." evidence="2" ref="1">
    <original>R</original>
    <variation>H</variation>
    <location>
        <position position="78"/>
    </location>
</feature>
<accession>Q52947</accession>